<name>RK20_SOLBU</name>
<sequence>MTRIKRGYIARRRRTKIRLFASSFRGAHSRLTRTITQQKIRALVSAHRDRDRKKRDFRRLWITRINAVIRERGVSYSYSRLIHDLYKRQLLLNRKILAQIAISNRNCLYMISNEIIKEVDWKESTRII</sequence>
<reference key="1">
    <citation type="journal article" date="2006" name="Theor. Appl. Genet.">
        <title>Complete chloroplast genome sequences of Solanum bulbocastanum, Solanum lycopersicum and comparative analyses with other Solanaceae genomes.</title>
        <authorList>
            <person name="Daniell H."/>
            <person name="Lee S.-B."/>
            <person name="Grevich J."/>
            <person name="Saski C."/>
            <person name="Quesada-Vargas T."/>
            <person name="Guda C."/>
            <person name="Tomkins J."/>
            <person name="Jansen R.K."/>
        </authorList>
    </citation>
    <scope>NUCLEOTIDE SEQUENCE [LARGE SCALE GENOMIC DNA]</scope>
    <source>
        <strain>cv. PT29</strain>
    </source>
</reference>
<organism>
    <name type="scientific">Solanum bulbocastanum</name>
    <name type="common">Wild potato</name>
    <dbReference type="NCBI Taxonomy" id="147425"/>
    <lineage>
        <taxon>Eukaryota</taxon>
        <taxon>Viridiplantae</taxon>
        <taxon>Streptophyta</taxon>
        <taxon>Embryophyta</taxon>
        <taxon>Tracheophyta</taxon>
        <taxon>Spermatophyta</taxon>
        <taxon>Magnoliopsida</taxon>
        <taxon>eudicotyledons</taxon>
        <taxon>Gunneridae</taxon>
        <taxon>Pentapetalae</taxon>
        <taxon>asterids</taxon>
        <taxon>lamiids</taxon>
        <taxon>Solanales</taxon>
        <taxon>Solanaceae</taxon>
        <taxon>Solanoideae</taxon>
        <taxon>Solaneae</taxon>
        <taxon>Solanum</taxon>
    </lineage>
</organism>
<gene>
    <name evidence="1" type="primary">rpl20</name>
</gene>
<geneLocation type="chloroplast"/>
<protein>
    <recommendedName>
        <fullName evidence="1">Large ribosomal subunit protein bL20c</fullName>
    </recommendedName>
    <alternativeName>
        <fullName evidence="2">50S ribosomal protein L20, chloroplastic</fullName>
    </alternativeName>
</protein>
<dbReference type="EMBL" id="DQ347958">
    <property type="protein sequence ID" value="ABC56236.1"/>
    <property type="molecule type" value="Genomic_DNA"/>
</dbReference>
<dbReference type="RefSeq" id="YP_538871.1">
    <property type="nucleotide sequence ID" value="NC_007943.1"/>
</dbReference>
<dbReference type="SMR" id="Q2MIG4"/>
<dbReference type="GeneID" id="3989516"/>
<dbReference type="GO" id="GO:0009507">
    <property type="term" value="C:chloroplast"/>
    <property type="evidence" value="ECO:0007669"/>
    <property type="project" value="UniProtKB-SubCell"/>
</dbReference>
<dbReference type="GO" id="GO:1990904">
    <property type="term" value="C:ribonucleoprotein complex"/>
    <property type="evidence" value="ECO:0007669"/>
    <property type="project" value="UniProtKB-KW"/>
</dbReference>
<dbReference type="GO" id="GO:0005840">
    <property type="term" value="C:ribosome"/>
    <property type="evidence" value="ECO:0007669"/>
    <property type="project" value="UniProtKB-KW"/>
</dbReference>
<dbReference type="GO" id="GO:0019843">
    <property type="term" value="F:rRNA binding"/>
    <property type="evidence" value="ECO:0007669"/>
    <property type="project" value="UniProtKB-UniRule"/>
</dbReference>
<dbReference type="GO" id="GO:0003735">
    <property type="term" value="F:structural constituent of ribosome"/>
    <property type="evidence" value="ECO:0007669"/>
    <property type="project" value="InterPro"/>
</dbReference>
<dbReference type="GO" id="GO:0000027">
    <property type="term" value="P:ribosomal large subunit assembly"/>
    <property type="evidence" value="ECO:0007669"/>
    <property type="project" value="UniProtKB-UniRule"/>
</dbReference>
<dbReference type="GO" id="GO:0006412">
    <property type="term" value="P:translation"/>
    <property type="evidence" value="ECO:0007669"/>
    <property type="project" value="InterPro"/>
</dbReference>
<dbReference type="CDD" id="cd07026">
    <property type="entry name" value="Ribosomal_L20"/>
    <property type="match status" value="1"/>
</dbReference>
<dbReference type="FunFam" id="1.10.1900.20:FF:000001">
    <property type="entry name" value="50S ribosomal protein L20"/>
    <property type="match status" value="1"/>
</dbReference>
<dbReference type="Gene3D" id="6.10.160.10">
    <property type="match status" value="1"/>
</dbReference>
<dbReference type="Gene3D" id="1.10.1900.20">
    <property type="entry name" value="Ribosomal protein L20"/>
    <property type="match status" value="1"/>
</dbReference>
<dbReference type="HAMAP" id="MF_00382">
    <property type="entry name" value="Ribosomal_bL20"/>
    <property type="match status" value="1"/>
</dbReference>
<dbReference type="InterPro" id="IPR005813">
    <property type="entry name" value="Ribosomal_bL20"/>
</dbReference>
<dbReference type="InterPro" id="IPR049946">
    <property type="entry name" value="RIBOSOMAL_L20_CS"/>
</dbReference>
<dbReference type="InterPro" id="IPR035566">
    <property type="entry name" value="Ribosomal_protein_bL20_C"/>
</dbReference>
<dbReference type="NCBIfam" id="TIGR01032">
    <property type="entry name" value="rplT_bact"/>
    <property type="match status" value="1"/>
</dbReference>
<dbReference type="PANTHER" id="PTHR10986">
    <property type="entry name" value="39S RIBOSOMAL PROTEIN L20"/>
    <property type="match status" value="1"/>
</dbReference>
<dbReference type="Pfam" id="PF00453">
    <property type="entry name" value="Ribosomal_L20"/>
    <property type="match status" value="1"/>
</dbReference>
<dbReference type="PRINTS" id="PR00062">
    <property type="entry name" value="RIBOSOMALL20"/>
</dbReference>
<dbReference type="SUPFAM" id="SSF74731">
    <property type="entry name" value="Ribosomal protein L20"/>
    <property type="match status" value="1"/>
</dbReference>
<dbReference type="PROSITE" id="PS00937">
    <property type="entry name" value="RIBOSOMAL_L20"/>
    <property type="match status" value="1"/>
</dbReference>
<keyword id="KW-0150">Chloroplast</keyword>
<keyword id="KW-0934">Plastid</keyword>
<keyword id="KW-0687">Ribonucleoprotein</keyword>
<keyword id="KW-0689">Ribosomal protein</keyword>
<keyword id="KW-0694">RNA-binding</keyword>
<keyword id="KW-0699">rRNA-binding</keyword>
<comment type="function">
    <text evidence="1">Binds directly to 23S ribosomal RNA and is necessary for the in vitro assembly process of the 50S ribosomal subunit. It is not involved in the protein synthesizing functions of that subunit.</text>
</comment>
<comment type="subcellular location">
    <subcellularLocation>
        <location>Plastid</location>
        <location>Chloroplast</location>
    </subcellularLocation>
</comment>
<comment type="similarity">
    <text evidence="1">Belongs to the bacterial ribosomal protein bL20 family.</text>
</comment>
<evidence type="ECO:0000255" key="1">
    <source>
        <dbReference type="HAMAP-Rule" id="MF_00382"/>
    </source>
</evidence>
<evidence type="ECO:0000305" key="2"/>
<proteinExistence type="inferred from homology"/>
<feature type="chain" id="PRO_0000276426" description="Large ribosomal subunit protein bL20c">
    <location>
        <begin position="1"/>
        <end position="128"/>
    </location>
</feature>
<accession>Q2MIG4</accession>